<reference key="1">
    <citation type="journal article" date="2008" name="PLoS Genet.">
        <title>Genomic islands in the pathogenic filamentous fungus Aspergillus fumigatus.</title>
        <authorList>
            <person name="Fedorova N.D."/>
            <person name="Khaldi N."/>
            <person name="Joardar V.S."/>
            <person name="Maiti R."/>
            <person name="Amedeo P."/>
            <person name="Anderson M.J."/>
            <person name="Crabtree J."/>
            <person name="Silva J.C."/>
            <person name="Badger J.H."/>
            <person name="Albarraq A."/>
            <person name="Angiuoli S."/>
            <person name="Bussey H."/>
            <person name="Bowyer P."/>
            <person name="Cotty P.J."/>
            <person name="Dyer P.S."/>
            <person name="Egan A."/>
            <person name="Galens K."/>
            <person name="Fraser-Liggett C.M."/>
            <person name="Haas B.J."/>
            <person name="Inman J.M."/>
            <person name="Kent R."/>
            <person name="Lemieux S."/>
            <person name="Malavazi I."/>
            <person name="Orvis J."/>
            <person name="Roemer T."/>
            <person name="Ronning C.M."/>
            <person name="Sundaram J.P."/>
            <person name="Sutton G."/>
            <person name="Turner G."/>
            <person name="Venter J.C."/>
            <person name="White O.R."/>
            <person name="Whitty B.R."/>
            <person name="Youngman P."/>
            <person name="Wolfe K.H."/>
            <person name="Goldman G.H."/>
            <person name="Wortman J.R."/>
            <person name="Jiang B."/>
            <person name="Denning D.W."/>
            <person name="Nierman W.C."/>
        </authorList>
    </citation>
    <scope>NUCLEOTIDE SEQUENCE [LARGE SCALE GENOMIC DNA]</scope>
    <source>
        <strain>ATCC 1007 / CBS 513.65 / DSM 816 / NCTC 3887 / NRRL 1 / QM 1276 / 107</strain>
    </source>
</reference>
<evidence type="ECO:0000250" key="1"/>
<evidence type="ECO:0000305" key="2"/>
<dbReference type="EC" id="1.1.1.67"/>
<dbReference type="EMBL" id="DS027057">
    <property type="protein sequence ID" value="EAW09124.1"/>
    <property type="molecule type" value="Genomic_DNA"/>
</dbReference>
<dbReference type="RefSeq" id="XP_001270550.1">
    <property type="nucleotide sequence ID" value="XM_001270549.1"/>
</dbReference>
<dbReference type="SMR" id="A1CLZ5"/>
<dbReference type="STRING" id="344612.A1CLZ5"/>
<dbReference type="EnsemblFungi" id="EAW09124">
    <property type="protein sequence ID" value="EAW09124"/>
    <property type="gene ID" value="ACLA_078730"/>
</dbReference>
<dbReference type="GeneID" id="4702636"/>
<dbReference type="KEGG" id="act:ACLA_078730"/>
<dbReference type="VEuPathDB" id="FungiDB:ACLA_078730"/>
<dbReference type="eggNOG" id="ENOG502QT30">
    <property type="taxonomic scope" value="Eukaryota"/>
</dbReference>
<dbReference type="HOGENOM" id="CLU_027324_0_1_1"/>
<dbReference type="OMA" id="IVASWAR"/>
<dbReference type="OrthoDB" id="418169at2759"/>
<dbReference type="Proteomes" id="UP000006701">
    <property type="component" value="Unassembled WGS sequence"/>
</dbReference>
<dbReference type="GO" id="GO:0050086">
    <property type="term" value="F:mannitol 2-dehydrogenase activity"/>
    <property type="evidence" value="ECO:0007669"/>
    <property type="project" value="UniProtKB-EC"/>
</dbReference>
<dbReference type="GO" id="GO:0046029">
    <property type="term" value="F:mannitol dehydrogenase activity"/>
    <property type="evidence" value="ECO:0007669"/>
    <property type="project" value="TreeGrafter"/>
</dbReference>
<dbReference type="FunFam" id="3.40.50.720:FF:000129">
    <property type="entry name" value="D-mannonate oxidoreductase"/>
    <property type="match status" value="1"/>
</dbReference>
<dbReference type="FunFam" id="1.10.1040.10:FF:000028">
    <property type="entry name" value="Mannitol 2-dehydrogenase"/>
    <property type="match status" value="1"/>
</dbReference>
<dbReference type="Gene3D" id="1.10.1040.10">
    <property type="entry name" value="N-(1-d-carboxylethyl)-l-norvaline Dehydrogenase, domain 2"/>
    <property type="match status" value="1"/>
</dbReference>
<dbReference type="Gene3D" id="3.40.50.720">
    <property type="entry name" value="NAD(P)-binding Rossmann-like Domain"/>
    <property type="match status" value="1"/>
</dbReference>
<dbReference type="InterPro" id="IPR008927">
    <property type="entry name" value="6-PGluconate_DH-like_C_sf"/>
</dbReference>
<dbReference type="InterPro" id="IPR013328">
    <property type="entry name" value="6PGD_dom2"/>
</dbReference>
<dbReference type="InterPro" id="IPR000669">
    <property type="entry name" value="Mannitol_DH"/>
</dbReference>
<dbReference type="InterPro" id="IPR050988">
    <property type="entry name" value="Mannitol_DH/Oxidoreductase"/>
</dbReference>
<dbReference type="InterPro" id="IPR013118">
    <property type="entry name" value="Mannitol_DH_C"/>
</dbReference>
<dbReference type="InterPro" id="IPR013131">
    <property type="entry name" value="Mannitol_DH_N"/>
</dbReference>
<dbReference type="InterPro" id="IPR036291">
    <property type="entry name" value="NAD(P)-bd_dom_sf"/>
</dbReference>
<dbReference type="PANTHER" id="PTHR43362:SF1">
    <property type="entry name" value="MANNITOL DEHYDROGENASE 2-RELATED"/>
    <property type="match status" value="1"/>
</dbReference>
<dbReference type="PANTHER" id="PTHR43362">
    <property type="entry name" value="MANNITOL DEHYDROGENASE DSF1-RELATED"/>
    <property type="match status" value="1"/>
</dbReference>
<dbReference type="Pfam" id="PF01232">
    <property type="entry name" value="Mannitol_dh"/>
    <property type="match status" value="1"/>
</dbReference>
<dbReference type="Pfam" id="PF08125">
    <property type="entry name" value="Mannitol_dh_C"/>
    <property type="match status" value="1"/>
</dbReference>
<dbReference type="PRINTS" id="PR00084">
    <property type="entry name" value="MTLDHDRGNASE"/>
</dbReference>
<dbReference type="SUPFAM" id="SSF48179">
    <property type="entry name" value="6-phosphogluconate dehydrogenase C-terminal domain-like"/>
    <property type="match status" value="1"/>
</dbReference>
<dbReference type="SUPFAM" id="SSF51735">
    <property type="entry name" value="NAD(P)-binding Rossmann-fold domains"/>
    <property type="match status" value="1"/>
</dbReference>
<feature type="chain" id="PRO_0000371538" description="Mannitol 2-dehydrogenase">
    <location>
        <begin position="1"/>
        <end position="502"/>
    </location>
</feature>
<feature type="binding site" evidence="1">
    <location>
        <begin position="37"/>
        <end position="48"/>
    </location>
    <ligand>
        <name>NAD(+)</name>
        <dbReference type="ChEBI" id="CHEBI:57540"/>
    </ligand>
</feature>
<gene>
    <name type="ORF">ACLA_078730</name>
</gene>
<comment type="function">
    <text evidence="1">Catalyzes the NAD(H)-dependent interconversion of D-fructose and D-mannitol in the mannitol metabolic pathway.</text>
</comment>
<comment type="catalytic activity">
    <reaction>
        <text>D-mannitol + NAD(+) = D-fructose + NADH + H(+)</text>
        <dbReference type="Rhea" id="RHEA:12084"/>
        <dbReference type="ChEBI" id="CHEBI:15378"/>
        <dbReference type="ChEBI" id="CHEBI:16899"/>
        <dbReference type="ChEBI" id="CHEBI:37721"/>
        <dbReference type="ChEBI" id="CHEBI:57540"/>
        <dbReference type="ChEBI" id="CHEBI:57945"/>
        <dbReference type="EC" id="1.1.1.67"/>
    </reaction>
</comment>
<comment type="subunit">
    <text evidence="1">Monomer.</text>
</comment>
<comment type="similarity">
    <text evidence="2">Belongs to the mannitol dehydrogenase family.</text>
</comment>
<protein>
    <recommendedName>
        <fullName>Mannitol 2-dehydrogenase</fullName>
        <shortName>M2DH</shortName>
        <shortName>MDH</shortName>
        <ecNumber>1.1.1.67</ecNumber>
    </recommendedName>
</protein>
<accession>A1CLZ5</accession>
<sequence>MAPLKLNSRNLSQIFAAGKSLVKVPTYQRNGAVKEGIVHIGVGGFHRAHLAVYVDRLMQEQGVTDYAICGVGLQPFDSTMRDALASQDNLYTVIERSAKGSFAHVIGSINSYLFAPDDREAVIAKMANPDTRIVSLTITESGYYYNENTHELQKEHPDIQFDLNPVNENKPRTTFGFLYAALERRHRLGLKPFTVMSCDNMQKNGSITRHMLESFARQRNPKVAEWIAEEGAFPNAMVDRITPQTSATDKTALAENFGIEDSWPVVTEPFMQWVIEDKFSDGRPPFEKIGVQVVKDVHAVEQFEKHKLRLLNGSHSAIGYPGQLAGFNYVHEVMEHPLFSKFVWQMMQQEVKPLLPEIPGVNIDDYCNTLIERFTNPTIMDQLPRICLNASGKIPQFIMPSIAEAIWVTAPFRRLCFVAAAWFCYIKGIDDSGKAFEVVDPMLNELQAKARAGGTNPSELLSIKNLFGDDLRTDPRFLKEVTKAMEDITRDGILKTLPKYID</sequence>
<organism>
    <name type="scientific">Aspergillus clavatus (strain ATCC 1007 / CBS 513.65 / DSM 816 / NCTC 3887 / NRRL 1 / QM 1276 / 107)</name>
    <dbReference type="NCBI Taxonomy" id="344612"/>
    <lineage>
        <taxon>Eukaryota</taxon>
        <taxon>Fungi</taxon>
        <taxon>Dikarya</taxon>
        <taxon>Ascomycota</taxon>
        <taxon>Pezizomycotina</taxon>
        <taxon>Eurotiomycetes</taxon>
        <taxon>Eurotiomycetidae</taxon>
        <taxon>Eurotiales</taxon>
        <taxon>Aspergillaceae</taxon>
        <taxon>Aspergillus</taxon>
        <taxon>Aspergillus subgen. Fumigati</taxon>
    </lineage>
</organism>
<proteinExistence type="inferred from homology"/>
<keyword id="KW-0520">NAD</keyword>
<keyword id="KW-0560">Oxidoreductase</keyword>
<keyword id="KW-1185">Reference proteome</keyword>
<name>M2DH_ASPCL</name>